<organism>
    <name type="scientific">Pseudomonas putida</name>
    <name type="common">Arthrobacter siderocapsulatus</name>
    <dbReference type="NCBI Taxonomy" id="303"/>
    <lineage>
        <taxon>Bacteria</taxon>
        <taxon>Pseudomonadati</taxon>
        <taxon>Pseudomonadota</taxon>
        <taxon>Gammaproteobacteria</taxon>
        <taxon>Pseudomonadales</taxon>
        <taxon>Pseudomonadaceae</taxon>
        <taxon>Pseudomonas</taxon>
    </lineage>
</organism>
<dbReference type="EC" id="1.8.1.4"/>
<dbReference type="EMBL" id="X55704">
    <property type="protein sequence ID" value="CAA39235.1"/>
    <property type="molecule type" value="Genomic_DNA"/>
</dbReference>
<dbReference type="PIR" id="S19685">
    <property type="entry name" value="S19685"/>
</dbReference>
<dbReference type="SMR" id="P31046"/>
<dbReference type="eggNOG" id="COG1249">
    <property type="taxonomic scope" value="Bacteria"/>
</dbReference>
<dbReference type="GO" id="GO:0005737">
    <property type="term" value="C:cytoplasm"/>
    <property type="evidence" value="ECO:0007669"/>
    <property type="project" value="UniProtKB-SubCell"/>
</dbReference>
<dbReference type="GO" id="GO:0004148">
    <property type="term" value="F:dihydrolipoyl dehydrogenase (NADH) activity"/>
    <property type="evidence" value="ECO:0007669"/>
    <property type="project" value="UniProtKB-EC"/>
</dbReference>
<dbReference type="GO" id="GO:0050660">
    <property type="term" value="F:flavin adenine dinucleotide binding"/>
    <property type="evidence" value="ECO:0007669"/>
    <property type="project" value="InterPro"/>
</dbReference>
<dbReference type="GO" id="GO:0006103">
    <property type="term" value="P:2-oxoglutarate metabolic process"/>
    <property type="evidence" value="ECO:0007669"/>
    <property type="project" value="TreeGrafter"/>
</dbReference>
<dbReference type="FunFam" id="3.30.390.30:FF:000001">
    <property type="entry name" value="Dihydrolipoyl dehydrogenase"/>
    <property type="match status" value="1"/>
</dbReference>
<dbReference type="FunFam" id="3.50.50.60:FF:000025">
    <property type="entry name" value="Dihydrolipoyl dehydrogenase"/>
    <property type="match status" value="1"/>
</dbReference>
<dbReference type="Gene3D" id="3.30.390.30">
    <property type="match status" value="1"/>
</dbReference>
<dbReference type="Gene3D" id="3.50.50.60">
    <property type="entry name" value="FAD/NAD(P)-binding domain"/>
    <property type="match status" value="2"/>
</dbReference>
<dbReference type="InterPro" id="IPR050151">
    <property type="entry name" value="Class-I_Pyr_Nuc-Dis_Oxidored"/>
</dbReference>
<dbReference type="InterPro" id="IPR036188">
    <property type="entry name" value="FAD/NAD-bd_sf"/>
</dbReference>
<dbReference type="InterPro" id="IPR023753">
    <property type="entry name" value="FAD/NAD-binding_dom"/>
</dbReference>
<dbReference type="InterPro" id="IPR016156">
    <property type="entry name" value="FAD/NAD-linked_Rdtase_dimer_sf"/>
</dbReference>
<dbReference type="InterPro" id="IPR006258">
    <property type="entry name" value="Lipoamide_DH"/>
</dbReference>
<dbReference type="InterPro" id="IPR001100">
    <property type="entry name" value="Pyr_nuc-diS_OxRdtase"/>
</dbReference>
<dbReference type="InterPro" id="IPR004099">
    <property type="entry name" value="Pyr_nucl-diS_OxRdtase_dimer"/>
</dbReference>
<dbReference type="InterPro" id="IPR012999">
    <property type="entry name" value="Pyr_OxRdtase_I_AS"/>
</dbReference>
<dbReference type="NCBIfam" id="TIGR01350">
    <property type="entry name" value="lipoamide_DH"/>
    <property type="match status" value="1"/>
</dbReference>
<dbReference type="PANTHER" id="PTHR22912:SF151">
    <property type="entry name" value="DIHYDROLIPOYL DEHYDROGENASE, MITOCHONDRIAL"/>
    <property type="match status" value="1"/>
</dbReference>
<dbReference type="PANTHER" id="PTHR22912">
    <property type="entry name" value="DISULFIDE OXIDOREDUCTASE"/>
    <property type="match status" value="1"/>
</dbReference>
<dbReference type="Pfam" id="PF07992">
    <property type="entry name" value="Pyr_redox_2"/>
    <property type="match status" value="1"/>
</dbReference>
<dbReference type="Pfam" id="PF02852">
    <property type="entry name" value="Pyr_redox_dim"/>
    <property type="match status" value="1"/>
</dbReference>
<dbReference type="PIRSF" id="PIRSF000350">
    <property type="entry name" value="Mercury_reductase_MerA"/>
    <property type="match status" value="1"/>
</dbReference>
<dbReference type="PRINTS" id="PR00368">
    <property type="entry name" value="FADPNR"/>
</dbReference>
<dbReference type="PRINTS" id="PR00411">
    <property type="entry name" value="PNDRDTASEI"/>
</dbReference>
<dbReference type="SUPFAM" id="SSF51905">
    <property type="entry name" value="FAD/NAD(P)-binding domain"/>
    <property type="match status" value="1"/>
</dbReference>
<dbReference type="SUPFAM" id="SSF55424">
    <property type="entry name" value="FAD/NAD-linked reductases, dimerisation (C-terminal) domain"/>
    <property type="match status" value="1"/>
</dbReference>
<dbReference type="PROSITE" id="PS00076">
    <property type="entry name" value="PYRIDINE_REDOX_1"/>
    <property type="match status" value="1"/>
</dbReference>
<protein>
    <recommendedName>
        <fullName>Dihydrolipoyl dehydrogenase 3</fullName>
        <ecNumber>1.8.1.4</ecNumber>
    </recommendedName>
    <alternativeName>
        <fullName>Dihydrolipoamide dehydrogenase 3</fullName>
        <shortName>LPD-3</shortName>
    </alternativeName>
</protein>
<reference key="1">
    <citation type="journal article" date="1991" name="Eur. J. Biochem.">
        <title>Cloning, sequence and transcriptional analysis of the structural gene for LPD-3, the third lipoamide dehydrogenase of Pseudomonas putida.</title>
        <authorList>
            <person name="Palmer J.A."/>
            <person name="Madhusudhan K.T."/>
            <person name="Hatter K."/>
            <person name="Sokatch J.R."/>
        </authorList>
    </citation>
    <scope>NUCLEOTIDE SEQUENCE [GENOMIC DNA]</scope>
    <source>
        <strain>G2</strain>
    </source>
</reference>
<reference key="2">
    <citation type="journal article" date="1989" name="J. Bacteriol.">
        <title>Isolation of a third lipoamide dehydrogenase from Pseudomonas putida.</title>
        <authorList>
            <person name="Burns G."/>
            <person name="Sykes P.J."/>
            <person name="Hatter K."/>
            <person name="Sokatch J.R."/>
        </authorList>
    </citation>
    <scope>PROTEIN SEQUENCE OF 1-10</scope>
</reference>
<accession>P31046</accession>
<name>DLDH3_PSEPU</name>
<feature type="chain" id="PRO_0000068040" description="Dihydrolipoyl dehydrogenase 3">
    <location>
        <begin position="1"/>
        <end position="466"/>
    </location>
</feature>
<feature type="active site" description="Proton acceptor" evidence="1">
    <location>
        <position position="445"/>
    </location>
</feature>
<feature type="binding site" evidence="1">
    <location>
        <begin position="33"/>
        <end position="42"/>
    </location>
    <ligand>
        <name>FAD</name>
        <dbReference type="ChEBI" id="CHEBI:57692"/>
    </ligand>
</feature>
<feature type="binding site" evidence="1">
    <location>
        <position position="51"/>
    </location>
    <ligand>
        <name>FAD</name>
        <dbReference type="ChEBI" id="CHEBI:57692"/>
    </ligand>
</feature>
<feature type="binding site" evidence="1">
    <location>
        <position position="115"/>
    </location>
    <ligand>
        <name>FAD</name>
        <dbReference type="ChEBI" id="CHEBI:57692"/>
    </ligand>
</feature>
<feature type="binding site" evidence="1">
    <location>
        <begin position="181"/>
        <end position="185"/>
    </location>
    <ligand>
        <name>NAD(+)</name>
        <dbReference type="ChEBI" id="CHEBI:57540"/>
    </ligand>
</feature>
<feature type="binding site" evidence="1">
    <location>
        <position position="204"/>
    </location>
    <ligand>
        <name>NAD(+)</name>
        <dbReference type="ChEBI" id="CHEBI:57540"/>
    </ligand>
</feature>
<feature type="binding site" evidence="1">
    <location>
        <position position="238"/>
    </location>
    <ligand>
        <name>NAD(+)</name>
        <dbReference type="ChEBI" id="CHEBI:57540"/>
    </ligand>
</feature>
<feature type="binding site" evidence="1">
    <location>
        <begin position="271"/>
        <end position="274"/>
    </location>
    <ligand>
        <name>NAD(+)</name>
        <dbReference type="ChEBI" id="CHEBI:57540"/>
    </ligand>
</feature>
<feature type="binding site" evidence="1">
    <location>
        <position position="313"/>
    </location>
    <ligand>
        <name>FAD</name>
        <dbReference type="ChEBI" id="CHEBI:57692"/>
    </ligand>
</feature>
<feature type="binding site" evidence="1">
    <location>
        <position position="321"/>
    </location>
    <ligand>
        <name>FAD</name>
        <dbReference type="ChEBI" id="CHEBI:57692"/>
    </ligand>
</feature>
<feature type="disulfide bond" description="Redox-active" evidence="1">
    <location>
        <begin position="42"/>
        <end position="47"/>
    </location>
</feature>
<keyword id="KW-0963">Cytoplasm</keyword>
<keyword id="KW-0903">Direct protein sequencing</keyword>
<keyword id="KW-1015">Disulfide bond</keyword>
<keyword id="KW-0274">FAD</keyword>
<keyword id="KW-0285">Flavoprotein</keyword>
<keyword id="KW-0520">NAD</keyword>
<keyword id="KW-0560">Oxidoreductase</keyword>
<keyword id="KW-0676">Redox-active center</keyword>
<comment type="function">
    <text>LPD-3 may substitute for lipoamide dehydrogenase of the 2-oxoglutarate dehydrogenase and pyruvate multienzyme complexes when the latter is inactive or missing.</text>
</comment>
<comment type="catalytic activity">
    <reaction>
        <text>N(6)-[(R)-dihydrolipoyl]-L-lysyl-[protein] + NAD(+) = N(6)-[(R)-lipoyl]-L-lysyl-[protein] + NADH + H(+)</text>
        <dbReference type="Rhea" id="RHEA:15045"/>
        <dbReference type="Rhea" id="RHEA-COMP:10474"/>
        <dbReference type="Rhea" id="RHEA-COMP:10475"/>
        <dbReference type="ChEBI" id="CHEBI:15378"/>
        <dbReference type="ChEBI" id="CHEBI:57540"/>
        <dbReference type="ChEBI" id="CHEBI:57945"/>
        <dbReference type="ChEBI" id="CHEBI:83099"/>
        <dbReference type="ChEBI" id="CHEBI:83100"/>
        <dbReference type="EC" id="1.8.1.4"/>
    </reaction>
</comment>
<comment type="cofactor">
    <cofactor evidence="1">
        <name>FAD</name>
        <dbReference type="ChEBI" id="CHEBI:57692"/>
    </cofactor>
    <text evidence="1">Binds 1 FAD per subunit.</text>
</comment>
<comment type="subunit">
    <text>Homodimer.</text>
</comment>
<comment type="subcellular location">
    <subcellularLocation>
        <location>Cytoplasm</location>
    </subcellularLocation>
</comment>
<comment type="miscellaneous">
    <text>The active site is a redox-active disulfide bond.</text>
</comment>
<comment type="similarity">
    <text evidence="2">Belongs to the class-I pyridine nucleotide-disulfide oxidoreductase family.</text>
</comment>
<gene>
    <name type="primary">lpd3</name>
</gene>
<evidence type="ECO:0000250" key="1"/>
<evidence type="ECO:0000305" key="2"/>
<sequence length="466" mass="49257">MKSYDVVIIGGGPGGYNAAIRAGQLGLTVACVEGRSTLGGTCLNVGCMPSKALLHASELYEAASGDEFAHLGIEVKPTLNLAQMMKQKDESVTGLTKGIEYLFRKNKVDWIKGWGRLDGVGKVVVKAEDGSETALQAKDIVIATGSEPTPLPGVTIDNQRIIDSTGALSLPQVPKHLVVIGAGVIGLELGSVWRRLGSQVTVIEYLDRICPGTDTETAKTLQKALAKQGMVFKLGSKVTQATASADGVSLVLEPAAGGTAESLQADYVLVAIGRRPYTKGLNLESVGLETDKRGMLAQRTPPTSVPGVWVIGDVTSGPMLAHKAEDEAVACIERIAGKPHEVNYNLIPGVIYTRPELATVGKTEEQLKAEGRAYKVGKFPFTANSRAKINHETEGFAKVIADAETDEVLGVHLVGPSVSEMIGEFCVAMEFSASAEDIALTCHPHPTRSEALRQAAMNVDGMAMQI</sequence>
<proteinExistence type="evidence at protein level"/>